<accession>P0A4P9</accession>
<accession>Q54916</accession>
<reference key="1">
    <citation type="journal article" date="1996" name="J. Bacteriol.">
        <title>Cloning and characterization of the parC and parE genes of Streptococcus pneumoniae encoding DNA topoisomerase IV: role in fluoroquinolone resistance.</title>
        <authorList>
            <person name="Pan X."/>
            <person name="Fisher M."/>
        </authorList>
    </citation>
    <scope>NUCLEOTIDE SEQUENCE [GENOMIC DNA]</scope>
    <source>
        <strain>7785</strain>
    </source>
</reference>
<reference key="2">
    <citation type="journal article" date="2001" name="Science">
        <title>Complete genome sequence of a virulent isolate of Streptococcus pneumoniae.</title>
        <authorList>
            <person name="Tettelin H."/>
            <person name="Nelson K.E."/>
            <person name="Paulsen I.T."/>
            <person name="Eisen J.A."/>
            <person name="Read T.D."/>
            <person name="Peterson S.N."/>
            <person name="Heidelberg J.F."/>
            <person name="DeBoy R.T."/>
            <person name="Haft D.H."/>
            <person name="Dodson R.J."/>
            <person name="Durkin A.S."/>
            <person name="Gwinn M.L."/>
            <person name="Kolonay J.F."/>
            <person name="Nelson W.C."/>
            <person name="Peterson J.D."/>
            <person name="Umayam L.A."/>
            <person name="White O."/>
            <person name="Salzberg S.L."/>
            <person name="Lewis M.R."/>
            <person name="Radune D."/>
            <person name="Holtzapple E.K."/>
            <person name="Khouri H.M."/>
            <person name="Wolf A.M."/>
            <person name="Utterback T.R."/>
            <person name="Hansen C.L."/>
            <person name="McDonald L.A."/>
            <person name="Feldblyum T.V."/>
            <person name="Angiuoli S.V."/>
            <person name="Dickinson T."/>
            <person name="Hickey E.K."/>
            <person name="Holt I.E."/>
            <person name="Loftus B.J."/>
            <person name="Yang F."/>
            <person name="Smith H.O."/>
            <person name="Venter J.C."/>
            <person name="Dougherty B.A."/>
            <person name="Morrison D.A."/>
            <person name="Hollingshead S.K."/>
            <person name="Fraser C.M."/>
        </authorList>
    </citation>
    <scope>NUCLEOTIDE SEQUENCE [LARGE SCALE GENOMIC DNA]</scope>
    <source>
        <strain>ATCC BAA-334 / TIGR4</strain>
    </source>
</reference>
<feature type="chain" id="PRO_0000188464" description="Glycerol-3-phosphate acyltransferase">
    <location>
        <begin position="1"/>
        <end position="213"/>
    </location>
</feature>
<feature type="transmembrane region" description="Helical" evidence="1">
    <location>
        <begin position="2"/>
        <end position="22"/>
    </location>
</feature>
<feature type="transmembrane region" description="Helical" evidence="1">
    <location>
        <begin position="52"/>
        <end position="74"/>
    </location>
</feature>
<feature type="transmembrane region" description="Helical" evidence="1">
    <location>
        <begin position="81"/>
        <end position="100"/>
    </location>
</feature>
<feature type="transmembrane region" description="Helical" evidence="1">
    <location>
        <begin position="112"/>
        <end position="132"/>
    </location>
</feature>
<feature type="transmembrane region" description="Helical" evidence="1">
    <location>
        <begin position="143"/>
        <end position="163"/>
    </location>
</feature>
<feature type="transmembrane region" description="Helical" evidence="1">
    <location>
        <begin position="164"/>
        <end position="184"/>
    </location>
</feature>
<feature type="sequence conflict" description="In Ref. 1; CAA91549." evidence="2" ref="1">
    <original>S</original>
    <variation>F</variation>
    <location>
        <position position="168"/>
    </location>
</feature>
<name>PLSY_STRPN</name>
<protein>
    <recommendedName>
        <fullName evidence="1">Glycerol-3-phosphate acyltransferase</fullName>
    </recommendedName>
    <alternativeName>
        <fullName evidence="1">Acyl-PO4 G3P acyltransferase</fullName>
    </alternativeName>
    <alternativeName>
        <fullName evidence="1">Acyl-phosphate--glycerol-3-phosphate acyltransferase</fullName>
    </alternativeName>
    <alternativeName>
        <fullName evidence="1">G3P acyltransferase</fullName>
        <shortName evidence="1">GPAT</shortName>
        <ecNumber evidence="1">2.3.1.275</ecNumber>
    </alternativeName>
    <alternativeName>
        <fullName evidence="1">Lysophosphatidic acid synthase</fullName>
        <shortName evidence="1">LPA synthase</shortName>
    </alternativeName>
</protein>
<gene>
    <name evidence="1" type="primary">plsY</name>
    <name type="ordered locus">SP_0851</name>
</gene>
<evidence type="ECO:0000255" key="1">
    <source>
        <dbReference type="HAMAP-Rule" id="MF_01043"/>
    </source>
</evidence>
<evidence type="ECO:0000305" key="2"/>
<dbReference type="EC" id="2.3.1.275" evidence="1"/>
<dbReference type="EMBL" id="Z67739">
    <property type="protein sequence ID" value="CAA91549.1"/>
    <property type="molecule type" value="Genomic_DNA"/>
</dbReference>
<dbReference type="EMBL" id="AE005672">
    <property type="protein sequence ID" value="AAK74980.1"/>
    <property type="molecule type" value="Genomic_DNA"/>
</dbReference>
<dbReference type="PIR" id="C95098">
    <property type="entry name" value="C95098"/>
</dbReference>
<dbReference type="RefSeq" id="WP_000628789.1">
    <property type="nucleotide sequence ID" value="NZ_CP155539.1"/>
</dbReference>
<dbReference type="SMR" id="P0A4P9"/>
<dbReference type="PaxDb" id="170187-SP_0851"/>
<dbReference type="EnsemblBacteria" id="AAK74980">
    <property type="protein sequence ID" value="AAK74980"/>
    <property type="gene ID" value="SP_0851"/>
</dbReference>
<dbReference type="GeneID" id="45653793"/>
<dbReference type="KEGG" id="spn:SP_0851"/>
<dbReference type="eggNOG" id="COG0344">
    <property type="taxonomic scope" value="Bacteria"/>
</dbReference>
<dbReference type="PhylomeDB" id="P0A4P9"/>
<dbReference type="BioCyc" id="SPNE170187:G1FZB-871-MONOMER"/>
<dbReference type="UniPathway" id="UPA00085"/>
<dbReference type="Proteomes" id="UP000000585">
    <property type="component" value="Chromosome"/>
</dbReference>
<dbReference type="GO" id="GO:0005886">
    <property type="term" value="C:plasma membrane"/>
    <property type="evidence" value="ECO:0007669"/>
    <property type="project" value="UniProtKB-SubCell"/>
</dbReference>
<dbReference type="GO" id="GO:0043772">
    <property type="term" value="F:acyl-phosphate glycerol-3-phosphate acyltransferase activity"/>
    <property type="evidence" value="ECO:0007669"/>
    <property type="project" value="UniProtKB-UniRule"/>
</dbReference>
<dbReference type="GO" id="GO:0008654">
    <property type="term" value="P:phospholipid biosynthetic process"/>
    <property type="evidence" value="ECO:0007669"/>
    <property type="project" value="UniProtKB-UniRule"/>
</dbReference>
<dbReference type="HAMAP" id="MF_01043">
    <property type="entry name" value="PlsY"/>
    <property type="match status" value="1"/>
</dbReference>
<dbReference type="InterPro" id="IPR003811">
    <property type="entry name" value="G3P_acylTferase_PlsY"/>
</dbReference>
<dbReference type="NCBIfam" id="TIGR00023">
    <property type="entry name" value="glycerol-3-phosphate 1-O-acyltransferase PlsY"/>
    <property type="match status" value="1"/>
</dbReference>
<dbReference type="PANTHER" id="PTHR30309:SF0">
    <property type="entry name" value="GLYCEROL-3-PHOSPHATE ACYLTRANSFERASE-RELATED"/>
    <property type="match status" value="1"/>
</dbReference>
<dbReference type="PANTHER" id="PTHR30309">
    <property type="entry name" value="INNER MEMBRANE PROTEIN YGIH"/>
    <property type="match status" value="1"/>
</dbReference>
<dbReference type="Pfam" id="PF02660">
    <property type="entry name" value="G3P_acyltransf"/>
    <property type="match status" value="1"/>
</dbReference>
<dbReference type="SMART" id="SM01207">
    <property type="entry name" value="G3P_acyltransf"/>
    <property type="match status" value="1"/>
</dbReference>
<proteinExistence type="inferred from homology"/>
<keyword id="KW-1003">Cell membrane</keyword>
<keyword id="KW-0444">Lipid biosynthesis</keyword>
<keyword id="KW-0443">Lipid metabolism</keyword>
<keyword id="KW-0472">Membrane</keyword>
<keyword id="KW-0594">Phospholipid biosynthesis</keyword>
<keyword id="KW-1208">Phospholipid metabolism</keyword>
<keyword id="KW-1185">Reference proteome</keyword>
<keyword id="KW-0808">Transferase</keyword>
<keyword id="KW-0812">Transmembrane</keyword>
<keyword id="KW-1133">Transmembrane helix</keyword>
<sequence>MITIVLLILAYLLGSIPSGLWIGQVFFQINLREHGSGNTGTTNTFRILGKKAGMATFVIDFFKGTLATLLPIIFHLQGVSPLIFGLLAVIGHTFPIFAGFKGGKAVATSAGVIFGFAPIFCLYLAIIFFGALYLGSMISLSSVTASIAAVIGVLLFPLFGFILSNYDSLFIAIILALASLIIIRHKDNIARIKNKTENLVPWGLNLTHQDPKK</sequence>
<organism>
    <name type="scientific">Streptococcus pneumoniae serotype 4 (strain ATCC BAA-334 / TIGR4)</name>
    <dbReference type="NCBI Taxonomy" id="170187"/>
    <lineage>
        <taxon>Bacteria</taxon>
        <taxon>Bacillati</taxon>
        <taxon>Bacillota</taxon>
        <taxon>Bacilli</taxon>
        <taxon>Lactobacillales</taxon>
        <taxon>Streptococcaceae</taxon>
        <taxon>Streptococcus</taxon>
    </lineage>
</organism>
<comment type="function">
    <text evidence="1">Catalyzes the transfer of an acyl group from acyl-phosphate (acyl-PO(4)) to glycerol-3-phosphate (G3P) to form lysophosphatidic acid (LPA). This enzyme utilizes acyl-phosphate as fatty acyl donor, but not acyl-CoA or acyl-ACP.</text>
</comment>
<comment type="catalytic activity">
    <reaction evidence="1">
        <text>an acyl phosphate + sn-glycerol 3-phosphate = a 1-acyl-sn-glycero-3-phosphate + phosphate</text>
        <dbReference type="Rhea" id="RHEA:34075"/>
        <dbReference type="ChEBI" id="CHEBI:43474"/>
        <dbReference type="ChEBI" id="CHEBI:57597"/>
        <dbReference type="ChEBI" id="CHEBI:57970"/>
        <dbReference type="ChEBI" id="CHEBI:59918"/>
        <dbReference type="EC" id="2.3.1.275"/>
    </reaction>
</comment>
<comment type="pathway">
    <text evidence="1">Lipid metabolism; phospholipid metabolism.</text>
</comment>
<comment type="subunit">
    <text evidence="1">Probably interacts with PlsX.</text>
</comment>
<comment type="subcellular location">
    <subcellularLocation>
        <location evidence="1">Cell membrane</location>
        <topology evidence="1">Multi-pass membrane protein</topology>
    </subcellularLocation>
</comment>
<comment type="similarity">
    <text evidence="1">Belongs to the PlsY family.</text>
</comment>